<accession>B4RC49</accession>
<reference key="1">
    <citation type="journal article" date="2008" name="BMC Genomics">
        <title>Complete genome of Phenylobacterium zucineum - a novel facultative intracellular bacterium isolated from human erythroleukemia cell line K562.</title>
        <authorList>
            <person name="Luo Y."/>
            <person name="Xu X."/>
            <person name="Ding Z."/>
            <person name="Liu Z."/>
            <person name="Zhang B."/>
            <person name="Yan Z."/>
            <person name="Sun J."/>
            <person name="Hu S."/>
            <person name="Hu X."/>
        </authorList>
    </citation>
    <scope>NUCLEOTIDE SEQUENCE [LARGE SCALE GENOMIC DNA]</scope>
    <source>
        <strain>HLK1</strain>
    </source>
</reference>
<sequence>MSITAERKAELIKTHARGEADTGSAEVQVAILSERISNLTEHFKTHKKDNHSRRGLLKLVSQRRSLLDHLKKADQARYQDLIEKLGLRR</sequence>
<evidence type="ECO:0000255" key="1">
    <source>
        <dbReference type="HAMAP-Rule" id="MF_01343"/>
    </source>
</evidence>
<evidence type="ECO:0000256" key="2">
    <source>
        <dbReference type="SAM" id="MobiDB-lite"/>
    </source>
</evidence>
<evidence type="ECO:0000305" key="3"/>
<dbReference type="EMBL" id="CP000747">
    <property type="protein sequence ID" value="ACG79842.1"/>
    <property type="molecule type" value="Genomic_DNA"/>
</dbReference>
<dbReference type="RefSeq" id="WP_012523980.1">
    <property type="nucleotide sequence ID" value="NC_011144.1"/>
</dbReference>
<dbReference type="SMR" id="B4RC49"/>
<dbReference type="STRING" id="450851.PHZ_c3433"/>
<dbReference type="KEGG" id="pzu:PHZ_c3433"/>
<dbReference type="eggNOG" id="COG0184">
    <property type="taxonomic scope" value="Bacteria"/>
</dbReference>
<dbReference type="HOGENOM" id="CLU_148518_0_0_5"/>
<dbReference type="OrthoDB" id="9799262at2"/>
<dbReference type="Proteomes" id="UP000001868">
    <property type="component" value="Chromosome"/>
</dbReference>
<dbReference type="GO" id="GO:0022627">
    <property type="term" value="C:cytosolic small ribosomal subunit"/>
    <property type="evidence" value="ECO:0007669"/>
    <property type="project" value="TreeGrafter"/>
</dbReference>
<dbReference type="GO" id="GO:0019843">
    <property type="term" value="F:rRNA binding"/>
    <property type="evidence" value="ECO:0007669"/>
    <property type="project" value="UniProtKB-UniRule"/>
</dbReference>
<dbReference type="GO" id="GO:0003735">
    <property type="term" value="F:structural constituent of ribosome"/>
    <property type="evidence" value="ECO:0007669"/>
    <property type="project" value="InterPro"/>
</dbReference>
<dbReference type="GO" id="GO:0006412">
    <property type="term" value="P:translation"/>
    <property type="evidence" value="ECO:0007669"/>
    <property type="project" value="UniProtKB-UniRule"/>
</dbReference>
<dbReference type="CDD" id="cd00353">
    <property type="entry name" value="Ribosomal_S15p_S13e"/>
    <property type="match status" value="1"/>
</dbReference>
<dbReference type="FunFam" id="1.10.287.10:FF:000002">
    <property type="entry name" value="30S ribosomal protein S15"/>
    <property type="match status" value="1"/>
</dbReference>
<dbReference type="Gene3D" id="6.10.250.3130">
    <property type="match status" value="1"/>
</dbReference>
<dbReference type="Gene3D" id="1.10.287.10">
    <property type="entry name" value="S15/NS1, RNA-binding"/>
    <property type="match status" value="1"/>
</dbReference>
<dbReference type="HAMAP" id="MF_01343_B">
    <property type="entry name" value="Ribosomal_uS15_B"/>
    <property type="match status" value="1"/>
</dbReference>
<dbReference type="InterPro" id="IPR000589">
    <property type="entry name" value="Ribosomal_uS15"/>
</dbReference>
<dbReference type="InterPro" id="IPR005290">
    <property type="entry name" value="Ribosomal_uS15_bac-type"/>
</dbReference>
<dbReference type="InterPro" id="IPR009068">
    <property type="entry name" value="uS15_NS1_RNA-bd_sf"/>
</dbReference>
<dbReference type="NCBIfam" id="TIGR00952">
    <property type="entry name" value="S15_bact"/>
    <property type="match status" value="1"/>
</dbReference>
<dbReference type="PANTHER" id="PTHR23321">
    <property type="entry name" value="RIBOSOMAL PROTEIN S15, BACTERIAL AND ORGANELLAR"/>
    <property type="match status" value="1"/>
</dbReference>
<dbReference type="PANTHER" id="PTHR23321:SF26">
    <property type="entry name" value="SMALL RIBOSOMAL SUBUNIT PROTEIN US15M"/>
    <property type="match status" value="1"/>
</dbReference>
<dbReference type="Pfam" id="PF00312">
    <property type="entry name" value="Ribosomal_S15"/>
    <property type="match status" value="1"/>
</dbReference>
<dbReference type="SMART" id="SM01387">
    <property type="entry name" value="Ribosomal_S15"/>
    <property type="match status" value="1"/>
</dbReference>
<dbReference type="SUPFAM" id="SSF47060">
    <property type="entry name" value="S15/NS1 RNA-binding domain"/>
    <property type="match status" value="1"/>
</dbReference>
<gene>
    <name evidence="1" type="primary">rpsO</name>
    <name type="ordered locus">PHZ_c3433</name>
</gene>
<comment type="function">
    <text evidence="1">One of the primary rRNA binding proteins, it binds directly to 16S rRNA where it helps nucleate assembly of the platform of the 30S subunit by binding and bridging several RNA helices of the 16S rRNA.</text>
</comment>
<comment type="function">
    <text evidence="1">Forms an intersubunit bridge (bridge B4) with the 23S rRNA of the 50S subunit in the ribosome.</text>
</comment>
<comment type="subunit">
    <text evidence="1">Part of the 30S ribosomal subunit. Forms a bridge to the 50S subunit in the 70S ribosome, contacting the 23S rRNA.</text>
</comment>
<comment type="similarity">
    <text evidence="1">Belongs to the universal ribosomal protein uS15 family.</text>
</comment>
<keyword id="KW-1185">Reference proteome</keyword>
<keyword id="KW-0687">Ribonucleoprotein</keyword>
<keyword id="KW-0689">Ribosomal protein</keyword>
<keyword id="KW-0694">RNA-binding</keyword>
<keyword id="KW-0699">rRNA-binding</keyword>
<feature type="chain" id="PRO_1000143149" description="Small ribosomal subunit protein uS15">
    <location>
        <begin position="1"/>
        <end position="89"/>
    </location>
</feature>
<feature type="region of interest" description="Disordered" evidence="2">
    <location>
        <begin position="1"/>
        <end position="24"/>
    </location>
</feature>
<feature type="compositionally biased region" description="Basic and acidic residues" evidence="2">
    <location>
        <begin position="1"/>
        <end position="20"/>
    </location>
</feature>
<name>RS15_PHEZH</name>
<proteinExistence type="inferred from homology"/>
<organism>
    <name type="scientific">Phenylobacterium zucineum (strain HLK1)</name>
    <dbReference type="NCBI Taxonomy" id="450851"/>
    <lineage>
        <taxon>Bacteria</taxon>
        <taxon>Pseudomonadati</taxon>
        <taxon>Pseudomonadota</taxon>
        <taxon>Alphaproteobacteria</taxon>
        <taxon>Caulobacterales</taxon>
        <taxon>Caulobacteraceae</taxon>
        <taxon>Phenylobacterium</taxon>
    </lineage>
</organism>
<protein>
    <recommendedName>
        <fullName evidence="1">Small ribosomal subunit protein uS15</fullName>
    </recommendedName>
    <alternativeName>
        <fullName evidence="3">30S ribosomal protein S15</fullName>
    </alternativeName>
</protein>